<accession>A1VYG9</accession>
<evidence type="ECO:0000255" key="1">
    <source>
        <dbReference type="HAMAP-Rule" id="MF_00089"/>
    </source>
</evidence>
<keyword id="KW-0004">4Fe-4S</keyword>
<keyword id="KW-0408">Iron</keyword>
<keyword id="KW-0411">Iron-sulfur</keyword>
<keyword id="KW-0456">Lyase</keyword>
<keyword id="KW-0479">Metal-binding</keyword>
<keyword id="KW-0949">S-adenosyl-L-methionine</keyword>
<keyword id="KW-0784">Thiamine biosynthesis</keyword>
<keyword id="KW-0862">Zinc</keyword>
<comment type="function">
    <text evidence="1">Catalyzes the synthesis of the hydroxymethylpyrimidine phosphate (HMP-P) moiety of thiamine from aminoimidazole ribotide (AIR) in a radical S-adenosyl-L-methionine (SAM)-dependent reaction.</text>
</comment>
<comment type="catalytic activity">
    <reaction evidence="1">
        <text>5-amino-1-(5-phospho-beta-D-ribosyl)imidazole + S-adenosyl-L-methionine = 4-amino-2-methyl-5-(phosphooxymethyl)pyrimidine + CO + 5'-deoxyadenosine + formate + L-methionine + 3 H(+)</text>
        <dbReference type="Rhea" id="RHEA:24840"/>
        <dbReference type="ChEBI" id="CHEBI:15378"/>
        <dbReference type="ChEBI" id="CHEBI:15740"/>
        <dbReference type="ChEBI" id="CHEBI:17245"/>
        <dbReference type="ChEBI" id="CHEBI:17319"/>
        <dbReference type="ChEBI" id="CHEBI:57844"/>
        <dbReference type="ChEBI" id="CHEBI:58354"/>
        <dbReference type="ChEBI" id="CHEBI:59789"/>
        <dbReference type="ChEBI" id="CHEBI:137981"/>
        <dbReference type="EC" id="4.1.99.17"/>
    </reaction>
</comment>
<comment type="cofactor">
    <cofactor evidence="1">
        <name>[4Fe-4S] cluster</name>
        <dbReference type="ChEBI" id="CHEBI:49883"/>
    </cofactor>
    <text evidence="1">Binds 1 [4Fe-4S] cluster per subunit. The cluster is coordinated with 3 cysteines and an exchangeable S-adenosyl-L-methionine.</text>
</comment>
<comment type="pathway">
    <text evidence="1">Cofactor biosynthesis; thiamine diphosphate biosynthesis.</text>
</comment>
<comment type="subunit">
    <text evidence="1">Homodimer.</text>
</comment>
<comment type="similarity">
    <text evidence="1">Belongs to the ThiC family.</text>
</comment>
<name>THIC_CAMJJ</name>
<dbReference type="EC" id="4.1.99.17" evidence="1"/>
<dbReference type="EMBL" id="CP000538">
    <property type="protein sequence ID" value="EAQ73394.1"/>
    <property type="molecule type" value="Genomic_DNA"/>
</dbReference>
<dbReference type="RefSeq" id="WP_002868797.1">
    <property type="nucleotide sequence ID" value="NC_008787.1"/>
</dbReference>
<dbReference type="SMR" id="A1VYG9"/>
<dbReference type="KEGG" id="cjj:CJJ81176_0478"/>
<dbReference type="eggNOG" id="COG0422">
    <property type="taxonomic scope" value="Bacteria"/>
</dbReference>
<dbReference type="HOGENOM" id="CLU_013181_2_2_7"/>
<dbReference type="UniPathway" id="UPA00060"/>
<dbReference type="Proteomes" id="UP000000646">
    <property type="component" value="Chromosome"/>
</dbReference>
<dbReference type="GO" id="GO:0005829">
    <property type="term" value="C:cytosol"/>
    <property type="evidence" value="ECO:0007669"/>
    <property type="project" value="TreeGrafter"/>
</dbReference>
<dbReference type="GO" id="GO:0051539">
    <property type="term" value="F:4 iron, 4 sulfur cluster binding"/>
    <property type="evidence" value="ECO:0007669"/>
    <property type="project" value="UniProtKB-KW"/>
</dbReference>
<dbReference type="GO" id="GO:0016830">
    <property type="term" value="F:carbon-carbon lyase activity"/>
    <property type="evidence" value="ECO:0007669"/>
    <property type="project" value="InterPro"/>
</dbReference>
<dbReference type="GO" id="GO:0008270">
    <property type="term" value="F:zinc ion binding"/>
    <property type="evidence" value="ECO:0007669"/>
    <property type="project" value="UniProtKB-UniRule"/>
</dbReference>
<dbReference type="GO" id="GO:0009228">
    <property type="term" value="P:thiamine biosynthetic process"/>
    <property type="evidence" value="ECO:0007669"/>
    <property type="project" value="UniProtKB-KW"/>
</dbReference>
<dbReference type="GO" id="GO:0009229">
    <property type="term" value="P:thiamine diphosphate biosynthetic process"/>
    <property type="evidence" value="ECO:0007669"/>
    <property type="project" value="UniProtKB-UniRule"/>
</dbReference>
<dbReference type="FunFam" id="3.20.20.540:FF:000001">
    <property type="entry name" value="Phosphomethylpyrimidine synthase"/>
    <property type="match status" value="1"/>
</dbReference>
<dbReference type="Gene3D" id="6.10.250.620">
    <property type="match status" value="1"/>
</dbReference>
<dbReference type="Gene3D" id="3.20.20.540">
    <property type="entry name" value="Radical SAM ThiC family, central domain"/>
    <property type="match status" value="1"/>
</dbReference>
<dbReference type="HAMAP" id="MF_00089">
    <property type="entry name" value="ThiC"/>
    <property type="match status" value="1"/>
</dbReference>
<dbReference type="InterPro" id="IPR037509">
    <property type="entry name" value="ThiC"/>
</dbReference>
<dbReference type="InterPro" id="IPR038521">
    <property type="entry name" value="ThiC/Bza_core_dom"/>
</dbReference>
<dbReference type="InterPro" id="IPR002817">
    <property type="entry name" value="ThiC/BzaA/B"/>
</dbReference>
<dbReference type="NCBIfam" id="NF009895">
    <property type="entry name" value="PRK13352.1"/>
    <property type="match status" value="1"/>
</dbReference>
<dbReference type="NCBIfam" id="TIGR00190">
    <property type="entry name" value="thiC"/>
    <property type="match status" value="1"/>
</dbReference>
<dbReference type="PANTHER" id="PTHR30557:SF1">
    <property type="entry name" value="PHOSPHOMETHYLPYRIMIDINE SYNTHASE, CHLOROPLASTIC"/>
    <property type="match status" value="1"/>
</dbReference>
<dbReference type="PANTHER" id="PTHR30557">
    <property type="entry name" value="THIAMINE BIOSYNTHESIS PROTEIN THIC"/>
    <property type="match status" value="1"/>
</dbReference>
<dbReference type="Pfam" id="PF01964">
    <property type="entry name" value="ThiC_Rad_SAM"/>
    <property type="match status" value="1"/>
</dbReference>
<dbReference type="SFLD" id="SFLDF00407">
    <property type="entry name" value="phosphomethylpyrimidine_syntha"/>
    <property type="match status" value="1"/>
</dbReference>
<dbReference type="SFLD" id="SFLDG01114">
    <property type="entry name" value="phosphomethylpyrimidine_syntha"/>
    <property type="match status" value="1"/>
</dbReference>
<dbReference type="SFLD" id="SFLDS00113">
    <property type="entry name" value="Radical_SAM_Phosphomethylpyrim"/>
    <property type="match status" value="1"/>
</dbReference>
<feature type="chain" id="PRO_1000004751" description="Phosphomethylpyrimidine synthase">
    <location>
        <begin position="1"/>
        <end position="430"/>
    </location>
</feature>
<feature type="binding site" evidence="1">
    <location>
        <position position="67"/>
    </location>
    <ligand>
        <name>substrate</name>
    </ligand>
</feature>
<feature type="binding site" evidence="1">
    <location>
        <position position="96"/>
    </location>
    <ligand>
        <name>substrate</name>
    </ligand>
</feature>
<feature type="binding site" evidence="1">
    <location>
        <position position="125"/>
    </location>
    <ligand>
        <name>substrate</name>
    </ligand>
</feature>
<feature type="binding site" evidence="1">
    <location>
        <position position="161"/>
    </location>
    <ligand>
        <name>substrate</name>
    </ligand>
</feature>
<feature type="binding site" evidence="1">
    <location>
        <begin position="183"/>
        <end position="185"/>
    </location>
    <ligand>
        <name>substrate</name>
    </ligand>
</feature>
<feature type="binding site" evidence="1">
    <location>
        <begin position="224"/>
        <end position="227"/>
    </location>
    <ligand>
        <name>substrate</name>
    </ligand>
</feature>
<feature type="binding site" evidence="1">
    <location>
        <position position="263"/>
    </location>
    <ligand>
        <name>substrate</name>
    </ligand>
</feature>
<feature type="binding site" evidence="1">
    <location>
        <position position="267"/>
    </location>
    <ligand>
        <name>Zn(2+)</name>
        <dbReference type="ChEBI" id="CHEBI:29105"/>
    </ligand>
</feature>
<feature type="binding site" evidence="1">
    <location>
        <position position="290"/>
    </location>
    <ligand>
        <name>substrate</name>
    </ligand>
</feature>
<feature type="binding site" evidence="1">
    <location>
        <position position="331"/>
    </location>
    <ligand>
        <name>Zn(2+)</name>
        <dbReference type="ChEBI" id="CHEBI:29105"/>
    </ligand>
</feature>
<feature type="binding site" evidence="1">
    <location>
        <position position="406"/>
    </location>
    <ligand>
        <name>[4Fe-4S] cluster</name>
        <dbReference type="ChEBI" id="CHEBI:49883"/>
        <note>4Fe-4S-S-AdoMet</note>
    </ligand>
</feature>
<feature type="binding site" evidence="1">
    <location>
        <position position="409"/>
    </location>
    <ligand>
        <name>[4Fe-4S] cluster</name>
        <dbReference type="ChEBI" id="CHEBI:49883"/>
        <note>4Fe-4S-S-AdoMet</note>
    </ligand>
</feature>
<feature type="binding site" evidence="1">
    <location>
        <position position="413"/>
    </location>
    <ligand>
        <name>[4Fe-4S] cluster</name>
        <dbReference type="ChEBI" id="CHEBI:49883"/>
        <note>4Fe-4S-S-AdoMet</note>
    </ligand>
</feature>
<proteinExistence type="inferred from homology"/>
<gene>
    <name evidence="1" type="primary">thiC</name>
    <name type="ordered locus">CJJ81176_0478</name>
</gene>
<organism>
    <name type="scientific">Campylobacter jejuni subsp. jejuni serotype O:23/36 (strain 81-176)</name>
    <dbReference type="NCBI Taxonomy" id="354242"/>
    <lineage>
        <taxon>Bacteria</taxon>
        <taxon>Pseudomonadati</taxon>
        <taxon>Campylobacterota</taxon>
        <taxon>Epsilonproteobacteria</taxon>
        <taxon>Campylobacterales</taxon>
        <taxon>Campylobacteraceae</taxon>
        <taxon>Campylobacter</taxon>
    </lineage>
</organism>
<reference key="1">
    <citation type="submission" date="2006-12" db="EMBL/GenBank/DDBJ databases">
        <authorList>
            <person name="Fouts D.E."/>
            <person name="Nelson K.E."/>
            <person name="Sebastian Y."/>
        </authorList>
    </citation>
    <scope>NUCLEOTIDE SEQUENCE [LARGE SCALE GENOMIC DNA]</scope>
    <source>
        <strain>81-176</strain>
    </source>
</reference>
<sequence>MKTQMNYAKEGIFTKEMQIVAQKENLSKDFLLENIACGKIIIPANINHKSLDPNGIGFGLRTKVNVNLGVSNDCVDYSEEMKKVELAHKFGIEAIMDLSNYGKTSRFRDELVNVSKAMIGTVPVYDAVGFLEKDLKQINAKDFLDVVYHHAKSGVDFMTIHAGINSRAAHIFKQSKRLTNIVSRGGSVLYAWMMMKDAENPFFEYYDDLLDICLKYDVTLSLGDALRPGSTHDASDGAQISELIELSLLTQRAWDVGIQVMIEGPGHMAINEIEANMQLEKRLCKGAPFYVLGPLVIDIGAGYDHISGAIGGAVAAASGADMLCYVTPAEHLRLPNLEDVREGIVATKIAAHAGDIAKLPKERARDDEMSKARQEIDWEKMFKLAIDGEKAKKMFNERRPDDLNSCSMCGKMCAMNTMNQILKGEDVSLA</sequence>
<protein>
    <recommendedName>
        <fullName evidence="1">Phosphomethylpyrimidine synthase</fullName>
        <ecNumber evidence="1">4.1.99.17</ecNumber>
    </recommendedName>
    <alternativeName>
        <fullName evidence="1">Hydroxymethylpyrimidine phosphate synthase</fullName>
        <shortName evidence="1">HMP-P synthase</shortName>
        <shortName evidence="1">HMP-phosphate synthase</shortName>
        <shortName evidence="1">HMPP synthase</shortName>
    </alternativeName>
    <alternativeName>
        <fullName evidence="1">Thiamine biosynthesis protein ThiC</fullName>
    </alternativeName>
</protein>